<comment type="function">
    <text evidence="1">F(1)F(0) ATP synthase produces ATP from ADP in the presence of a proton or sodium gradient. F-type ATPases consist of two structural domains, F(1) containing the extramembraneous catalytic core and F(0) containing the membrane proton channel, linked together by a central stalk and a peripheral stalk. During catalysis, ATP synthesis in the catalytic domain of F(1) is coupled via a rotary mechanism of the central stalk subunits to proton translocation.</text>
</comment>
<comment type="function">
    <text evidence="1">Component of the F(0) channel, it forms part of the peripheral stalk, linking F(1) to F(0). The b'-subunit is a diverged and duplicated form of b found in plants and photosynthetic bacteria.</text>
</comment>
<comment type="subunit">
    <text evidence="1">F-type ATPases have 2 components, F(1) - the catalytic core - and F(0) - the membrane proton channel. F(1) has five subunits: alpha(3), beta(3), gamma(1), delta(1), epsilon(1). F(0) has four main subunits: a(1), b(1), b'(1) and c(10-14). The alpha and beta chains form an alternating ring which encloses part of the gamma chain. F(1) is attached to F(0) by a central stalk formed by the gamma and epsilon chains, while a peripheral stalk is formed by the delta, b and b' chains.</text>
</comment>
<comment type="subcellular location">
    <subcellularLocation>
        <location evidence="1">Cellular thylakoid membrane</location>
        <topology evidence="1">Single-pass membrane protein</topology>
    </subcellularLocation>
</comment>
<comment type="similarity">
    <text evidence="1">Belongs to the ATPase B chain family.</text>
</comment>
<reference key="1">
    <citation type="journal article" date="2011" name="MBio">
        <title>Novel metabolic attributes of the genus Cyanothece, comprising a group of unicellular nitrogen-fixing Cyanobacteria.</title>
        <authorList>
            <person name="Bandyopadhyay A."/>
            <person name="Elvitigala T."/>
            <person name="Welsh E."/>
            <person name="Stockel J."/>
            <person name="Liberton M."/>
            <person name="Min H."/>
            <person name="Sherman L.A."/>
            <person name="Pakrasi H.B."/>
        </authorList>
    </citation>
    <scope>NUCLEOTIDE SEQUENCE [LARGE SCALE GENOMIC DNA]</scope>
    <source>
        <strain>PCC 7424</strain>
    </source>
</reference>
<sequence length="143" mass="15944">MFDFDATLPLMALQFLVLAVVLNAVFYKPLGKALDSRADYIRSNENQAREQLAKAQNLAQEYEKQLGDARRQSNEIIAAAQAQAKQIADEKIAQAQKEAQAQKEAAAKEIEQQKQEAMTALEQQVDALSRQILEKILGSELVK</sequence>
<proteinExistence type="inferred from homology"/>
<organism>
    <name type="scientific">Gloeothece citriformis (strain PCC 7424)</name>
    <name type="common">Cyanothece sp. (strain PCC 7424)</name>
    <dbReference type="NCBI Taxonomy" id="65393"/>
    <lineage>
        <taxon>Bacteria</taxon>
        <taxon>Bacillati</taxon>
        <taxon>Cyanobacteriota</taxon>
        <taxon>Cyanophyceae</taxon>
        <taxon>Oscillatoriophycideae</taxon>
        <taxon>Chroococcales</taxon>
        <taxon>Aphanothecaceae</taxon>
        <taxon>Gloeothece</taxon>
        <taxon>Gloeothece citriformis</taxon>
    </lineage>
</organism>
<dbReference type="EMBL" id="CP001291">
    <property type="protein sequence ID" value="ACK71036.1"/>
    <property type="molecule type" value="Genomic_DNA"/>
</dbReference>
<dbReference type="RefSeq" id="WP_015954639.1">
    <property type="nucleotide sequence ID" value="NC_011729.1"/>
</dbReference>
<dbReference type="SMR" id="B7KKR7"/>
<dbReference type="STRING" id="65393.PCC7424_2622"/>
<dbReference type="KEGG" id="cyc:PCC7424_2622"/>
<dbReference type="eggNOG" id="COG0711">
    <property type="taxonomic scope" value="Bacteria"/>
</dbReference>
<dbReference type="HOGENOM" id="CLU_079215_9_0_3"/>
<dbReference type="OrthoDB" id="426571at2"/>
<dbReference type="Proteomes" id="UP000002384">
    <property type="component" value="Chromosome"/>
</dbReference>
<dbReference type="GO" id="GO:0031676">
    <property type="term" value="C:plasma membrane-derived thylakoid membrane"/>
    <property type="evidence" value="ECO:0007669"/>
    <property type="project" value="UniProtKB-SubCell"/>
</dbReference>
<dbReference type="GO" id="GO:0045259">
    <property type="term" value="C:proton-transporting ATP synthase complex"/>
    <property type="evidence" value="ECO:0007669"/>
    <property type="project" value="UniProtKB-KW"/>
</dbReference>
<dbReference type="GO" id="GO:0046933">
    <property type="term" value="F:proton-transporting ATP synthase activity, rotational mechanism"/>
    <property type="evidence" value="ECO:0007669"/>
    <property type="project" value="UniProtKB-UniRule"/>
</dbReference>
<dbReference type="GO" id="GO:0046961">
    <property type="term" value="F:proton-transporting ATPase activity, rotational mechanism"/>
    <property type="evidence" value="ECO:0007669"/>
    <property type="project" value="TreeGrafter"/>
</dbReference>
<dbReference type="CDD" id="cd06503">
    <property type="entry name" value="ATP-synt_Fo_b"/>
    <property type="match status" value="1"/>
</dbReference>
<dbReference type="Gene3D" id="1.20.5.620">
    <property type="entry name" value="F1F0 ATP synthase subunit B, membrane domain"/>
    <property type="match status" value="1"/>
</dbReference>
<dbReference type="HAMAP" id="MF_01398">
    <property type="entry name" value="ATP_synth_b_bprime"/>
    <property type="match status" value="1"/>
</dbReference>
<dbReference type="HAMAP" id="MF_01399">
    <property type="entry name" value="ATP_synth_bprime"/>
    <property type="match status" value="1"/>
</dbReference>
<dbReference type="InterPro" id="IPR034679">
    <property type="entry name" value="ATP_synth_b"/>
</dbReference>
<dbReference type="InterPro" id="IPR028987">
    <property type="entry name" value="ATP_synth_B-like_membr_sf"/>
</dbReference>
<dbReference type="InterPro" id="IPR002146">
    <property type="entry name" value="ATP_synth_b/b'su_bac/chlpt"/>
</dbReference>
<dbReference type="InterPro" id="IPR050059">
    <property type="entry name" value="ATP_synthase_B_chain"/>
</dbReference>
<dbReference type="NCBIfam" id="NF005607">
    <property type="entry name" value="PRK07353.1"/>
    <property type="match status" value="1"/>
</dbReference>
<dbReference type="PANTHER" id="PTHR33445">
    <property type="entry name" value="ATP SYNTHASE SUBUNIT B', CHLOROPLASTIC"/>
    <property type="match status" value="1"/>
</dbReference>
<dbReference type="PANTHER" id="PTHR33445:SF2">
    <property type="entry name" value="ATP SYNTHASE SUBUNIT B', CHLOROPLASTIC"/>
    <property type="match status" value="1"/>
</dbReference>
<dbReference type="Pfam" id="PF00430">
    <property type="entry name" value="ATP-synt_B"/>
    <property type="match status" value="1"/>
</dbReference>
<dbReference type="SUPFAM" id="SSF81573">
    <property type="entry name" value="F1F0 ATP synthase subunit B, membrane domain"/>
    <property type="match status" value="1"/>
</dbReference>
<accession>B7KKR7</accession>
<evidence type="ECO:0000255" key="1">
    <source>
        <dbReference type="HAMAP-Rule" id="MF_01399"/>
    </source>
</evidence>
<feature type="chain" id="PRO_0000369006" description="ATP synthase subunit b'">
    <location>
        <begin position="1"/>
        <end position="143"/>
    </location>
</feature>
<feature type="transmembrane region" description="Helical" evidence="1">
    <location>
        <begin position="6"/>
        <end position="26"/>
    </location>
</feature>
<keyword id="KW-0066">ATP synthesis</keyword>
<keyword id="KW-0138">CF(0)</keyword>
<keyword id="KW-0375">Hydrogen ion transport</keyword>
<keyword id="KW-0406">Ion transport</keyword>
<keyword id="KW-0472">Membrane</keyword>
<keyword id="KW-1185">Reference proteome</keyword>
<keyword id="KW-0793">Thylakoid</keyword>
<keyword id="KW-0812">Transmembrane</keyword>
<keyword id="KW-1133">Transmembrane helix</keyword>
<keyword id="KW-0813">Transport</keyword>
<name>ATPF2_GLOC7</name>
<protein>
    <recommendedName>
        <fullName evidence="1">ATP synthase subunit b'</fullName>
    </recommendedName>
    <alternativeName>
        <fullName evidence="1">ATP synthase F(0) sector subunit b'</fullName>
    </alternativeName>
    <alternativeName>
        <fullName evidence="1">ATPase subunit II</fullName>
    </alternativeName>
    <alternativeName>
        <fullName evidence="1">F-type ATPase subunit b'</fullName>
        <shortName evidence="1">F-ATPase subunit b'</shortName>
    </alternativeName>
</protein>
<gene>
    <name evidence="1" type="primary">atpF2</name>
    <name evidence="1" type="synonym">atpG</name>
    <name type="ordered locus">PCC7424_2622</name>
</gene>